<comment type="function">
    <text evidence="1">Nucleotide-binding protein.</text>
</comment>
<comment type="similarity">
    <text evidence="1">Belongs to the YajQ family.</text>
</comment>
<dbReference type="EMBL" id="CP000720">
    <property type="protein sequence ID" value="ABS46821.1"/>
    <property type="molecule type" value="Genomic_DNA"/>
</dbReference>
<dbReference type="RefSeq" id="WP_002208655.1">
    <property type="nucleotide sequence ID" value="NC_009708.1"/>
</dbReference>
<dbReference type="SMR" id="A7FLD6"/>
<dbReference type="KEGG" id="ypi:YpsIP31758_3104"/>
<dbReference type="HOGENOM" id="CLU_099839_1_0_6"/>
<dbReference type="Proteomes" id="UP000002412">
    <property type="component" value="Chromosome"/>
</dbReference>
<dbReference type="GO" id="GO:0005829">
    <property type="term" value="C:cytosol"/>
    <property type="evidence" value="ECO:0007669"/>
    <property type="project" value="TreeGrafter"/>
</dbReference>
<dbReference type="GO" id="GO:0000166">
    <property type="term" value="F:nucleotide binding"/>
    <property type="evidence" value="ECO:0007669"/>
    <property type="project" value="TreeGrafter"/>
</dbReference>
<dbReference type="CDD" id="cd11740">
    <property type="entry name" value="YajQ_like"/>
    <property type="match status" value="1"/>
</dbReference>
<dbReference type="FunFam" id="3.30.70.860:FF:000001">
    <property type="entry name" value="UPF0234 protein YajQ"/>
    <property type="match status" value="1"/>
</dbReference>
<dbReference type="FunFam" id="3.30.70.990:FF:000001">
    <property type="entry name" value="UPF0234 protein YajQ"/>
    <property type="match status" value="1"/>
</dbReference>
<dbReference type="Gene3D" id="3.30.70.860">
    <property type="match status" value="1"/>
</dbReference>
<dbReference type="Gene3D" id="3.30.70.990">
    <property type="entry name" value="YajQ-like, domain 2"/>
    <property type="match status" value="1"/>
</dbReference>
<dbReference type="HAMAP" id="MF_00632">
    <property type="entry name" value="YajQ"/>
    <property type="match status" value="1"/>
</dbReference>
<dbReference type="InterPro" id="IPR007551">
    <property type="entry name" value="DUF520"/>
</dbReference>
<dbReference type="InterPro" id="IPR035571">
    <property type="entry name" value="UPF0234-like_C"/>
</dbReference>
<dbReference type="InterPro" id="IPR035570">
    <property type="entry name" value="UPF0234_N"/>
</dbReference>
<dbReference type="InterPro" id="IPR036183">
    <property type="entry name" value="YajQ-like_sf"/>
</dbReference>
<dbReference type="NCBIfam" id="NF003819">
    <property type="entry name" value="PRK05412.1"/>
    <property type="match status" value="1"/>
</dbReference>
<dbReference type="PANTHER" id="PTHR30476">
    <property type="entry name" value="UPF0234 PROTEIN YAJQ"/>
    <property type="match status" value="1"/>
</dbReference>
<dbReference type="PANTHER" id="PTHR30476:SF0">
    <property type="entry name" value="UPF0234 PROTEIN YAJQ"/>
    <property type="match status" value="1"/>
</dbReference>
<dbReference type="Pfam" id="PF04461">
    <property type="entry name" value="DUF520"/>
    <property type="match status" value="1"/>
</dbReference>
<dbReference type="SUPFAM" id="SSF89963">
    <property type="entry name" value="YajQ-like"/>
    <property type="match status" value="2"/>
</dbReference>
<evidence type="ECO:0000255" key="1">
    <source>
        <dbReference type="HAMAP-Rule" id="MF_00632"/>
    </source>
</evidence>
<name>Y3104_YERP3</name>
<gene>
    <name type="ordered locus">YpsIP31758_3104</name>
</gene>
<sequence length="163" mass="18350">MPSFDIVSEIDMQEVRNAVENATRDLANRWDFRNVPASFELNEKNESIKVVSESDFQVEQLLDILRAQLSKRGIEGAALEIPEEMARSGKTYSVDAKLKQGIESVQAKKLVKLIKDSKLKVQAQIQGEQVRVTGKARDDLQAVMALVRAADLGQPFQFNNFRD</sequence>
<proteinExistence type="inferred from homology"/>
<reference key="1">
    <citation type="journal article" date="2007" name="PLoS Genet.">
        <title>The complete genome sequence of Yersinia pseudotuberculosis IP31758, the causative agent of Far East scarlet-like fever.</title>
        <authorList>
            <person name="Eppinger M."/>
            <person name="Rosovitz M.J."/>
            <person name="Fricke W.F."/>
            <person name="Rasko D.A."/>
            <person name="Kokorina G."/>
            <person name="Fayolle C."/>
            <person name="Lindler L.E."/>
            <person name="Carniel E."/>
            <person name="Ravel J."/>
        </authorList>
    </citation>
    <scope>NUCLEOTIDE SEQUENCE [LARGE SCALE GENOMIC DNA]</scope>
    <source>
        <strain>IP 31758</strain>
    </source>
</reference>
<protein>
    <recommendedName>
        <fullName evidence="1">Nucleotide-binding protein YpsIP31758_3104</fullName>
    </recommendedName>
</protein>
<keyword id="KW-0547">Nucleotide-binding</keyword>
<organism>
    <name type="scientific">Yersinia pseudotuberculosis serotype O:1b (strain IP 31758)</name>
    <dbReference type="NCBI Taxonomy" id="349747"/>
    <lineage>
        <taxon>Bacteria</taxon>
        <taxon>Pseudomonadati</taxon>
        <taxon>Pseudomonadota</taxon>
        <taxon>Gammaproteobacteria</taxon>
        <taxon>Enterobacterales</taxon>
        <taxon>Yersiniaceae</taxon>
        <taxon>Yersinia</taxon>
    </lineage>
</organism>
<accession>A7FLD6</accession>
<feature type="chain" id="PRO_1000061406" description="Nucleotide-binding protein YpsIP31758_3104">
    <location>
        <begin position="1"/>
        <end position="163"/>
    </location>
</feature>